<proteinExistence type="inferred from homology"/>
<organism>
    <name type="scientific">Debaryomyces hansenii (strain ATCC 36239 / CBS 767 / BCRC 21394 / JCM 1990 / NBRC 0083 / IGC 2968)</name>
    <name type="common">Yeast</name>
    <name type="synonym">Torulaspora hansenii</name>
    <dbReference type="NCBI Taxonomy" id="284592"/>
    <lineage>
        <taxon>Eukaryota</taxon>
        <taxon>Fungi</taxon>
        <taxon>Dikarya</taxon>
        <taxon>Ascomycota</taxon>
        <taxon>Saccharomycotina</taxon>
        <taxon>Pichiomycetes</taxon>
        <taxon>Debaryomycetaceae</taxon>
        <taxon>Debaryomyces</taxon>
    </lineage>
</organism>
<comment type="function">
    <text evidence="1">Mitochondrial intermembrane chaperone that participates in the import and insertion of some multi-pass transmembrane proteins into the mitochondrial inner membrane. Also required for the transfer of beta-barrel precursors from the TOM complex to the sorting and assembly machinery (SAM complex) of the outer membrane. Acts as a chaperone-like protein that protects the hydrophobic precursors from aggregation and guide them through the mitochondrial intermembrane space. The TIM8-TIM13 complex is non essential and only mediates the import of few proteins, while the predominant TIM9-TIM10 70 kDa complex is crucial and mediates the import of much more proteins (By similarity).</text>
</comment>
<comment type="subunit">
    <text evidence="1">Heterohexamer; composed of 3 copies of TIM8 and 3 copies of TIM13, named soluble 70 kDa complex. Associates with the TIM22 complex, whose core is composed of TIM22 and TIM54. Interacts with the transmembrane regions of multi-pass transmembrane proteins in transit (By similarity).</text>
</comment>
<comment type="subcellular location">
    <subcellularLocation>
        <location evidence="1">Mitochondrion inner membrane</location>
        <topology evidence="1">Peripheral membrane protein</topology>
        <orientation evidence="1">Intermembrane side</orientation>
    </subcellularLocation>
</comment>
<comment type="domain">
    <text evidence="1">The twin CX3C motif contains 4 conserved Cys residues that form 2 disulfide bonds in the mitochondrial intermembrane space. However, during the transit of TIM13 from cytoplasm into mitochondrion, the Cys residues probably coordinate zinc, thereby preventing folding and allowing its transfer across mitochondrial outer membrane (By similarity).</text>
</comment>
<comment type="similarity">
    <text evidence="3">Belongs to the small Tim family.</text>
</comment>
<feature type="chain" id="PRO_0000228074" description="Mitochondrial import inner membrane translocase subunit TIM13">
    <location>
        <begin position="1"/>
        <end position="98"/>
    </location>
</feature>
<feature type="region of interest" description="Disordered" evidence="2">
    <location>
        <begin position="1"/>
        <end position="24"/>
    </location>
</feature>
<feature type="short sequence motif" description="Twin CX3C motif">
    <location>
        <begin position="51"/>
        <end position="74"/>
    </location>
</feature>
<feature type="disulfide bond" evidence="1">
    <location>
        <begin position="51"/>
        <end position="74"/>
    </location>
</feature>
<feature type="disulfide bond" evidence="1">
    <location>
        <begin position="55"/>
        <end position="70"/>
    </location>
</feature>
<dbReference type="EMBL" id="CR382139">
    <property type="protein sequence ID" value="CAG90829.1"/>
    <property type="molecule type" value="Genomic_DNA"/>
</dbReference>
<dbReference type="RefSeq" id="XP_462323.1">
    <property type="nucleotide sequence ID" value="XM_462323.1"/>
</dbReference>
<dbReference type="SMR" id="Q6BHJ8"/>
<dbReference type="STRING" id="284592.Q6BHJ8"/>
<dbReference type="GeneID" id="2905261"/>
<dbReference type="KEGG" id="dha:DEHA2G18018g"/>
<dbReference type="VEuPathDB" id="FungiDB:DEHA2G18018g"/>
<dbReference type="eggNOG" id="KOG1733">
    <property type="taxonomic scope" value="Eukaryota"/>
</dbReference>
<dbReference type="HOGENOM" id="CLU_141397_0_2_1"/>
<dbReference type="InParanoid" id="Q6BHJ8"/>
<dbReference type="OMA" id="MAAWNQV"/>
<dbReference type="OrthoDB" id="7813104at2759"/>
<dbReference type="Proteomes" id="UP000000599">
    <property type="component" value="Chromosome G"/>
</dbReference>
<dbReference type="GO" id="GO:0005743">
    <property type="term" value="C:mitochondrial inner membrane"/>
    <property type="evidence" value="ECO:0007669"/>
    <property type="project" value="UniProtKB-SubCell"/>
</dbReference>
<dbReference type="GO" id="GO:0042719">
    <property type="term" value="C:mitochondrial intermembrane space protein transporter complex"/>
    <property type="evidence" value="ECO:0007669"/>
    <property type="project" value="EnsemblFungi"/>
</dbReference>
<dbReference type="GO" id="GO:0046872">
    <property type="term" value="F:metal ion binding"/>
    <property type="evidence" value="ECO:0007669"/>
    <property type="project" value="UniProtKB-KW"/>
</dbReference>
<dbReference type="GO" id="GO:0140318">
    <property type="term" value="F:protein transporter activity"/>
    <property type="evidence" value="ECO:0007669"/>
    <property type="project" value="EnsemblFungi"/>
</dbReference>
<dbReference type="GO" id="GO:0045039">
    <property type="term" value="P:protein insertion into mitochondrial inner membrane"/>
    <property type="evidence" value="ECO:0007669"/>
    <property type="project" value="EnsemblFungi"/>
</dbReference>
<dbReference type="FunFam" id="1.10.287.810:FF:000001">
    <property type="entry name" value="mitochondrial import inner membrane translocase subunit TIM13"/>
    <property type="match status" value="1"/>
</dbReference>
<dbReference type="Gene3D" id="1.10.287.810">
    <property type="entry name" value="Mitochondrial import inner membrane translocase subunit tim13 like domains"/>
    <property type="match status" value="1"/>
</dbReference>
<dbReference type="InterPro" id="IPR004217">
    <property type="entry name" value="Tim10-like"/>
</dbReference>
<dbReference type="InterPro" id="IPR035427">
    <property type="entry name" value="Tim10-like_dom_sf"/>
</dbReference>
<dbReference type="Pfam" id="PF02953">
    <property type="entry name" value="zf-Tim10_DDP"/>
    <property type="match status" value="1"/>
</dbReference>
<dbReference type="SUPFAM" id="SSF144122">
    <property type="entry name" value="Tim10-like"/>
    <property type="match status" value="1"/>
</dbReference>
<gene>
    <name type="primary">TIM13</name>
    <name type="ordered locus">DEHA2G18018g</name>
</gene>
<sequence length="98" mass="10909">MAFFGTPSTSTSTGTTSGQSQQVKQQIQEQISQELAVANATELVNKITENCFEKCVEQPQNGLNPQQDACVNQCLEKYMRSWNVVSKSYITRIQQSSN</sequence>
<reference key="1">
    <citation type="journal article" date="2004" name="Nature">
        <title>Genome evolution in yeasts.</title>
        <authorList>
            <person name="Dujon B."/>
            <person name="Sherman D."/>
            <person name="Fischer G."/>
            <person name="Durrens P."/>
            <person name="Casaregola S."/>
            <person name="Lafontaine I."/>
            <person name="de Montigny J."/>
            <person name="Marck C."/>
            <person name="Neuveglise C."/>
            <person name="Talla E."/>
            <person name="Goffard N."/>
            <person name="Frangeul L."/>
            <person name="Aigle M."/>
            <person name="Anthouard V."/>
            <person name="Babour A."/>
            <person name="Barbe V."/>
            <person name="Barnay S."/>
            <person name="Blanchin S."/>
            <person name="Beckerich J.-M."/>
            <person name="Beyne E."/>
            <person name="Bleykasten C."/>
            <person name="Boisrame A."/>
            <person name="Boyer J."/>
            <person name="Cattolico L."/>
            <person name="Confanioleri F."/>
            <person name="de Daruvar A."/>
            <person name="Despons L."/>
            <person name="Fabre E."/>
            <person name="Fairhead C."/>
            <person name="Ferry-Dumazet H."/>
            <person name="Groppi A."/>
            <person name="Hantraye F."/>
            <person name="Hennequin C."/>
            <person name="Jauniaux N."/>
            <person name="Joyet P."/>
            <person name="Kachouri R."/>
            <person name="Kerrest A."/>
            <person name="Koszul R."/>
            <person name="Lemaire M."/>
            <person name="Lesur I."/>
            <person name="Ma L."/>
            <person name="Muller H."/>
            <person name="Nicaud J.-M."/>
            <person name="Nikolski M."/>
            <person name="Oztas S."/>
            <person name="Ozier-Kalogeropoulos O."/>
            <person name="Pellenz S."/>
            <person name="Potier S."/>
            <person name="Richard G.-F."/>
            <person name="Straub M.-L."/>
            <person name="Suleau A."/>
            <person name="Swennen D."/>
            <person name="Tekaia F."/>
            <person name="Wesolowski-Louvel M."/>
            <person name="Westhof E."/>
            <person name="Wirth B."/>
            <person name="Zeniou-Meyer M."/>
            <person name="Zivanovic Y."/>
            <person name="Bolotin-Fukuhara M."/>
            <person name="Thierry A."/>
            <person name="Bouchier C."/>
            <person name="Caudron B."/>
            <person name="Scarpelli C."/>
            <person name="Gaillardin C."/>
            <person name="Weissenbach J."/>
            <person name="Wincker P."/>
            <person name="Souciet J.-L."/>
        </authorList>
    </citation>
    <scope>NUCLEOTIDE SEQUENCE [LARGE SCALE GENOMIC DNA]</scope>
    <source>
        <strain>ATCC 36239 / CBS 767 / BCRC 21394 / JCM 1990 / NBRC 0083 / IGC 2968</strain>
    </source>
</reference>
<evidence type="ECO:0000250" key="1"/>
<evidence type="ECO:0000256" key="2">
    <source>
        <dbReference type="SAM" id="MobiDB-lite"/>
    </source>
</evidence>
<evidence type="ECO:0000305" key="3"/>
<protein>
    <recommendedName>
        <fullName>Mitochondrial import inner membrane translocase subunit TIM13</fullName>
    </recommendedName>
</protein>
<keyword id="KW-0143">Chaperone</keyword>
<keyword id="KW-1015">Disulfide bond</keyword>
<keyword id="KW-0472">Membrane</keyword>
<keyword id="KW-0479">Metal-binding</keyword>
<keyword id="KW-0496">Mitochondrion</keyword>
<keyword id="KW-0999">Mitochondrion inner membrane</keyword>
<keyword id="KW-0653">Protein transport</keyword>
<keyword id="KW-1185">Reference proteome</keyword>
<keyword id="KW-0811">Translocation</keyword>
<keyword id="KW-0813">Transport</keyword>
<keyword id="KW-0862">Zinc</keyword>
<accession>Q6BHJ8</accession>
<name>TIM13_DEBHA</name>